<proteinExistence type="inferred from homology"/>
<gene>
    <name evidence="1" type="primary">rlmE</name>
    <name evidence="1" type="synonym">ftsJ</name>
    <name evidence="1" type="synonym">rrmJ</name>
    <name type="ordered locus">Adeh_1043</name>
</gene>
<comment type="function">
    <text evidence="1">Specifically methylates the uridine in position 2552 of 23S rRNA at the 2'-O position of the ribose in the fully assembled 50S ribosomal subunit.</text>
</comment>
<comment type="catalytic activity">
    <reaction evidence="1">
        <text>uridine(2552) in 23S rRNA + S-adenosyl-L-methionine = 2'-O-methyluridine(2552) in 23S rRNA + S-adenosyl-L-homocysteine + H(+)</text>
        <dbReference type="Rhea" id="RHEA:42720"/>
        <dbReference type="Rhea" id="RHEA-COMP:10202"/>
        <dbReference type="Rhea" id="RHEA-COMP:10203"/>
        <dbReference type="ChEBI" id="CHEBI:15378"/>
        <dbReference type="ChEBI" id="CHEBI:57856"/>
        <dbReference type="ChEBI" id="CHEBI:59789"/>
        <dbReference type="ChEBI" id="CHEBI:65315"/>
        <dbReference type="ChEBI" id="CHEBI:74478"/>
        <dbReference type="EC" id="2.1.1.166"/>
    </reaction>
</comment>
<comment type="subcellular location">
    <subcellularLocation>
        <location evidence="1">Cytoplasm</location>
    </subcellularLocation>
</comment>
<comment type="similarity">
    <text evidence="1">Belongs to the class I-like SAM-binding methyltransferase superfamily. RNA methyltransferase RlmE family.</text>
</comment>
<keyword id="KW-0963">Cytoplasm</keyword>
<keyword id="KW-0489">Methyltransferase</keyword>
<keyword id="KW-1185">Reference proteome</keyword>
<keyword id="KW-0698">rRNA processing</keyword>
<keyword id="KW-0949">S-adenosyl-L-methionine</keyword>
<keyword id="KW-0808">Transferase</keyword>
<organism>
    <name type="scientific">Anaeromyxobacter dehalogenans (strain 2CP-C)</name>
    <dbReference type="NCBI Taxonomy" id="290397"/>
    <lineage>
        <taxon>Bacteria</taxon>
        <taxon>Pseudomonadati</taxon>
        <taxon>Myxococcota</taxon>
        <taxon>Myxococcia</taxon>
        <taxon>Myxococcales</taxon>
        <taxon>Cystobacterineae</taxon>
        <taxon>Anaeromyxobacteraceae</taxon>
        <taxon>Anaeromyxobacter</taxon>
    </lineage>
</organism>
<accession>Q2IPT3</accession>
<protein>
    <recommendedName>
        <fullName evidence="1">Ribosomal RNA large subunit methyltransferase E</fullName>
        <ecNumber evidence="1">2.1.1.166</ecNumber>
    </recommendedName>
    <alternativeName>
        <fullName evidence="1">23S rRNA Um2552 methyltransferase</fullName>
    </alternativeName>
    <alternativeName>
        <fullName evidence="1">rRNA (uridine-2'-O-)-methyltransferase</fullName>
    </alternativeName>
</protein>
<sequence>MAKPYDPKDFYYRKAKKQGLRARSAFKIEEILHRHRLLGRGDAVLDLGAAPGGFLQILAEAVGEKGVAVGVDLEPIRNLGKRWVRTAIVDLLAPDALDKIRLLHDGRFRLVTSDMAPKTIGIKVTDEARSLELVRMALSVAEQVLVPGGAFVAKVFMGGDFPALKRELQGRFAAMHVIRPEAVRESSYEVYVLGTGFRGRAAAVAPAAVKAEAPRAPAPPEQAAAPEEATAPATRAARQKPAPAKKPAAAKRPAARKRAAKKPARRA</sequence>
<name>RLME_ANADE</name>
<feature type="chain" id="PRO_0000282723" description="Ribosomal RNA large subunit methyltransferase E">
    <location>
        <begin position="1"/>
        <end position="267"/>
    </location>
</feature>
<feature type="region of interest" description="Disordered" evidence="2">
    <location>
        <begin position="212"/>
        <end position="267"/>
    </location>
</feature>
<feature type="compositionally biased region" description="Low complexity" evidence="2">
    <location>
        <begin position="212"/>
        <end position="252"/>
    </location>
</feature>
<feature type="compositionally biased region" description="Basic residues" evidence="2">
    <location>
        <begin position="253"/>
        <end position="267"/>
    </location>
</feature>
<feature type="active site" description="Proton acceptor" evidence="1">
    <location>
        <position position="154"/>
    </location>
</feature>
<feature type="binding site" evidence="1">
    <location>
        <position position="52"/>
    </location>
    <ligand>
        <name>S-adenosyl-L-methionine</name>
        <dbReference type="ChEBI" id="CHEBI:59789"/>
    </ligand>
</feature>
<feature type="binding site" evidence="1">
    <location>
        <position position="54"/>
    </location>
    <ligand>
        <name>S-adenosyl-L-methionine</name>
        <dbReference type="ChEBI" id="CHEBI:59789"/>
    </ligand>
</feature>
<feature type="binding site" evidence="1">
    <location>
        <position position="72"/>
    </location>
    <ligand>
        <name>S-adenosyl-L-methionine</name>
        <dbReference type="ChEBI" id="CHEBI:59789"/>
    </ligand>
</feature>
<feature type="binding site" evidence="1">
    <location>
        <position position="90"/>
    </location>
    <ligand>
        <name>S-adenosyl-L-methionine</name>
        <dbReference type="ChEBI" id="CHEBI:59789"/>
    </ligand>
</feature>
<feature type="binding site" evidence="1">
    <location>
        <position position="114"/>
    </location>
    <ligand>
        <name>S-adenosyl-L-methionine</name>
        <dbReference type="ChEBI" id="CHEBI:59789"/>
    </ligand>
</feature>
<dbReference type="EC" id="2.1.1.166" evidence="1"/>
<dbReference type="EMBL" id="CP000251">
    <property type="protein sequence ID" value="ABC80818.1"/>
    <property type="molecule type" value="Genomic_DNA"/>
</dbReference>
<dbReference type="RefSeq" id="WP_011420101.1">
    <property type="nucleotide sequence ID" value="NC_007760.1"/>
</dbReference>
<dbReference type="SMR" id="Q2IPT3"/>
<dbReference type="STRING" id="290397.Adeh_1043"/>
<dbReference type="KEGG" id="ade:Adeh_1043"/>
<dbReference type="eggNOG" id="COG0293">
    <property type="taxonomic scope" value="Bacteria"/>
</dbReference>
<dbReference type="HOGENOM" id="CLU_009422_3_0_7"/>
<dbReference type="OrthoDB" id="9790080at2"/>
<dbReference type="Proteomes" id="UP000001935">
    <property type="component" value="Chromosome"/>
</dbReference>
<dbReference type="GO" id="GO:0005737">
    <property type="term" value="C:cytoplasm"/>
    <property type="evidence" value="ECO:0007669"/>
    <property type="project" value="UniProtKB-SubCell"/>
</dbReference>
<dbReference type="GO" id="GO:0008650">
    <property type="term" value="F:rRNA (uridine-2'-O-)-methyltransferase activity"/>
    <property type="evidence" value="ECO:0007669"/>
    <property type="project" value="UniProtKB-UniRule"/>
</dbReference>
<dbReference type="CDD" id="cd02440">
    <property type="entry name" value="AdoMet_MTases"/>
    <property type="match status" value="1"/>
</dbReference>
<dbReference type="Gene3D" id="3.40.50.150">
    <property type="entry name" value="Vaccinia Virus protein VP39"/>
    <property type="match status" value="1"/>
</dbReference>
<dbReference type="HAMAP" id="MF_01547">
    <property type="entry name" value="RNA_methyltr_E"/>
    <property type="match status" value="1"/>
</dbReference>
<dbReference type="InterPro" id="IPR050082">
    <property type="entry name" value="RNA_methyltr_RlmE"/>
</dbReference>
<dbReference type="InterPro" id="IPR002877">
    <property type="entry name" value="RNA_MeTrfase_FtsJ_dom"/>
</dbReference>
<dbReference type="InterPro" id="IPR015507">
    <property type="entry name" value="rRNA-MeTfrase_E"/>
</dbReference>
<dbReference type="InterPro" id="IPR029063">
    <property type="entry name" value="SAM-dependent_MTases_sf"/>
</dbReference>
<dbReference type="PANTHER" id="PTHR10920:SF13">
    <property type="entry name" value="PRE-RRNA 2'-O-RIBOSE RNA METHYLTRANSFERASE FTSJ3"/>
    <property type="match status" value="1"/>
</dbReference>
<dbReference type="PANTHER" id="PTHR10920">
    <property type="entry name" value="RIBOSOMAL RNA METHYLTRANSFERASE"/>
    <property type="match status" value="1"/>
</dbReference>
<dbReference type="Pfam" id="PF01728">
    <property type="entry name" value="FtsJ"/>
    <property type="match status" value="1"/>
</dbReference>
<dbReference type="SUPFAM" id="SSF53335">
    <property type="entry name" value="S-adenosyl-L-methionine-dependent methyltransferases"/>
    <property type="match status" value="1"/>
</dbReference>
<reference key="1">
    <citation type="submission" date="2006-01" db="EMBL/GenBank/DDBJ databases">
        <title>Complete sequence of Anaeromyxobacter dehalogenans 2CP-C.</title>
        <authorList>
            <person name="Copeland A."/>
            <person name="Lucas S."/>
            <person name="Lapidus A."/>
            <person name="Barry K."/>
            <person name="Detter J.C."/>
            <person name="Glavina T."/>
            <person name="Hammon N."/>
            <person name="Israni S."/>
            <person name="Pitluck S."/>
            <person name="Brettin T."/>
            <person name="Bruce D."/>
            <person name="Han C."/>
            <person name="Tapia R."/>
            <person name="Gilna P."/>
            <person name="Kiss H."/>
            <person name="Schmutz J."/>
            <person name="Larimer F."/>
            <person name="Land M."/>
            <person name="Kyrpides N."/>
            <person name="Anderson I."/>
            <person name="Sanford R.A."/>
            <person name="Ritalahti K.M."/>
            <person name="Thomas H.S."/>
            <person name="Kirby J.R."/>
            <person name="Zhulin I.B."/>
            <person name="Loeffler F.E."/>
            <person name="Richardson P."/>
        </authorList>
    </citation>
    <scope>NUCLEOTIDE SEQUENCE [LARGE SCALE GENOMIC DNA]</scope>
    <source>
        <strain>2CP-C</strain>
    </source>
</reference>
<evidence type="ECO:0000255" key="1">
    <source>
        <dbReference type="HAMAP-Rule" id="MF_01547"/>
    </source>
</evidence>
<evidence type="ECO:0000256" key="2">
    <source>
        <dbReference type="SAM" id="MobiDB-lite"/>
    </source>
</evidence>